<keyword id="KW-0963">Cytoplasm</keyword>
<keyword id="KW-0489">Methyltransferase</keyword>
<keyword id="KW-1185">Reference proteome</keyword>
<keyword id="KW-0698">rRNA processing</keyword>
<keyword id="KW-0949">S-adenosyl-L-methionine</keyword>
<keyword id="KW-0808">Transferase</keyword>
<organism>
    <name type="scientific">Haemophilus ducreyi (strain 35000HP / ATCC 700724)</name>
    <dbReference type="NCBI Taxonomy" id="233412"/>
    <lineage>
        <taxon>Bacteria</taxon>
        <taxon>Pseudomonadati</taxon>
        <taxon>Pseudomonadota</taxon>
        <taxon>Gammaproteobacteria</taxon>
        <taxon>Pasteurellales</taxon>
        <taxon>Pasteurellaceae</taxon>
        <taxon>Haemophilus</taxon>
    </lineage>
</organism>
<name>RSMC_HAEDU</name>
<sequence>MLSLKSEVLARHLPLFNGKSILLFGNVRDRFADQIRSISSHVAIFSHYFDYARHYNDVEFGLDCTTPANLGVFYWTKNKQECHYQLLQWLSQTAIGQQMLIIGENRAGVRSVEKLLSPFGQIAKIDSARRCGLYHFELQTIPQFDCQKFWKSYRLADLTVLSLPAAFSSTELDAGSQLLLSSFTNQDRLTGNVLDLGCGAGVIGAYLKQRFPAISLTMSDIHSMAIHSAQATLAKNKLTGTVIASDVFSHINDRFDLIVSNPPFHDDIDTAYHTVESLIMQAKNHLNYGGELRIVANAFLPYPDLLDKAFGSHQVVTKSNKFKVYSARV</sequence>
<protein>
    <recommendedName>
        <fullName evidence="1">Ribosomal RNA small subunit methyltransferase C</fullName>
        <ecNumber evidence="1">2.1.1.172</ecNumber>
    </recommendedName>
    <alternativeName>
        <fullName evidence="1">16S rRNA m2G1207 methyltransferase</fullName>
    </alternativeName>
    <alternativeName>
        <fullName evidence="1">rRNA (guanine-N(2)-)-methyltransferase RsmC</fullName>
    </alternativeName>
</protein>
<gene>
    <name evidence="1" type="primary">rsmC</name>
    <name type="ordered locus">HD_0210</name>
</gene>
<reference key="1">
    <citation type="submission" date="2003-06" db="EMBL/GenBank/DDBJ databases">
        <title>The complete genome sequence of Haemophilus ducreyi.</title>
        <authorList>
            <person name="Munson R.S. Jr."/>
            <person name="Ray W.C."/>
            <person name="Mahairas G."/>
            <person name="Sabo P."/>
            <person name="Mungur R."/>
            <person name="Johnson L."/>
            <person name="Nguyen D."/>
            <person name="Wang J."/>
            <person name="Forst C."/>
            <person name="Hood L."/>
        </authorList>
    </citation>
    <scope>NUCLEOTIDE SEQUENCE [LARGE SCALE GENOMIC DNA]</scope>
    <source>
        <strain>35000HP / ATCC 700724</strain>
    </source>
</reference>
<accession>Q7VP87</accession>
<comment type="function">
    <text evidence="1">Specifically methylates the guanine in position 1207 of 16S rRNA in the 30S particle.</text>
</comment>
<comment type="catalytic activity">
    <reaction evidence="1">
        <text>guanosine(1207) in 16S rRNA + S-adenosyl-L-methionine = N(2)-methylguanosine(1207) in 16S rRNA + S-adenosyl-L-homocysteine + H(+)</text>
        <dbReference type="Rhea" id="RHEA:42736"/>
        <dbReference type="Rhea" id="RHEA-COMP:10213"/>
        <dbReference type="Rhea" id="RHEA-COMP:10214"/>
        <dbReference type="ChEBI" id="CHEBI:15378"/>
        <dbReference type="ChEBI" id="CHEBI:57856"/>
        <dbReference type="ChEBI" id="CHEBI:59789"/>
        <dbReference type="ChEBI" id="CHEBI:74269"/>
        <dbReference type="ChEBI" id="CHEBI:74481"/>
        <dbReference type="EC" id="2.1.1.172"/>
    </reaction>
</comment>
<comment type="subunit">
    <text evidence="1">Monomer.</text>
</comment>
<comment type="subcellular location">
    <subcellularLocation>
        <location evidence="1">Cytoplasm</location>
    </subcellularLocation>
</comment>
<comment type="similarity">
    <text evidence="1">Belongs to the methyltransferase superfamily. RsmC family.</text>
</comment>
<dbReference type="EC" id="2.1.1.172" evidence="1"/>
<dbReference type="EMBL" id="AE017143">
    <property type="protein sequence ID" value="AAP95200.1"/>
    <property type="molecule type" value="Genomic_DNA"/>
</dbReference>
<dbReference type="RefSeq" id="WP_010944253.1">
    <property type="nucleotide sequence ID" value="NC_002940.2"/>
</dbReference>
<dbReference type="SMR" id="Q7VP87"/>
<dbReference type="STRING" id="233412.HD_0210"/>
<dbReference type="DNASU" id="1490217"/>
<dbReference type="KEGG" id="hdu:HD_0210"/>
<dbReference type="eggNOG" id="COG2813">
    <property type="taxonomic scope" value="Bacteria"/>
</dbReference>
<dbReference type="HOGENOM" id="CLU_049581_0_1_6"/>
<dbReference type="OrthoDB" id="9816072at2"/>
<dbReference type="Proteomes" id="UP000001022">
    <property type="component" value="Chromosome"/>
</dbReference>
<dbReference type="GO" id="GO:0005737">
    <property type="term" value="C:cytoplasm"/>
    <property type="evidence" value="ECO:0007669"/>
    <property type="project" value="UniProtKB-SubCell"/>
</dbReference>
<dbReference type="GO" id="GO:0052914">
    <property type="term" value="F:16S rRNA (guanine(1207)-N(2))-methyltransferase activity"/>
    <property type="evidence" value="ECO:0007669"/>
    <property type="project" value="UniProtKB-EC"/>
</dbReference>
<dbReference type="GO" id="GO:0003676">
    <property type="term" value="F:nucleic acid binding"/>
    <property type="evidence" value="ECO:0007669"/>
    <property type="project" value="InterPro"/>
</dbReference>
<dbReference type="CDD" id="cd02440">
    <property type="entry name" value="AdoMet_MTases"/>
    <property type="match status" value="1"/>
</dbReference>
<dbReference type="Gene3D" id="3.40.50.150">
    <property type="entry name" value="Vaccinia Virus protein VP39"/>
    <property type="match status" value="2"/>
</dbReference>
<dbReference type="HAMAP" id="MF_01862">
    <property type="entry name" value="16SrRNA_methyltr_C"/>
    <property type="match status" value="1"/>
</dbReference>
<dbReference type="InterPro" id="IPR002052">
    <property type="entry name" value="DNA_methylase_N6_adenine_CS"/>
</dbReference>
<dbReference type="InterPro" id="IPR013675">
    <property type="entry name" value="Mtase_sm_N"/>
</dbReference>
<dbReference type="InterPro" id="IPR023543">
    <property type="entry name" value="rRNA_ssu_MeTfrase_C"/>
</dbReference>
<dbReference type="InterPro" id="IPR046977">
    <property type="entry name" value="RsmC/RlmG"/>
</dbReference>
<dbReference type="InterPro" id="IPR029063">
    <property type="entry name" value="SAM-dependent_MTases_sf"/>
</dbReference>
<dbReference type="InterPro" id="IPR007848">
    <property type="entry name" value="Small_mtfrase_dom"/>
</dbReference>
<dbReference type="NCBIfam" id="NF007023">
    <property type="entry name" value="PRK09489.1"/>
    <property type="match status" value="1"/>
</dbReference>
<dbReference type="PANTHER" id="PTHR47816">
    <property type="entry name" value="RIBOSOMAL RNA SMALL SUBUNIT METHYLTRANSFERASE C"/>
    <property type="match status" value="1"/>
</dbReference>
<dbReference type="PANTHER" id="PTHR47816:SF4">
    <property type="entry name" value="RIBOSOMAL RNA SMALL SUBUNIT METHYLTRANSFERASE C"/>
    <property type="match status" value="1"/>
</dbReference>
<dbReference type="Pfam" id="PF05175">
    <property type="entry name" value="MTS"/>
    <property type="match status" value="1"/>
</dbReference>
<dbReference type="Pfam" id="PF08468">
    <property type="entry name" value="MTS_N"/>
    <property type="match status" value="1"/>
</dbReference>
<dbReference type="SUPFAM" id="SSF53335">
    <property type="entry name" value="S-adenosyl-L-methionine-dependent methyltransferases"/>
    <property type="match status" value="1"/>
</dbReference>
<proteinExistence type="inferred from homology"/>
<feature type="chain" id="PRO_0000369717" description="Ribosomal RNA small subunit methyltransferase C">
    <location>
        <begin position="1"/>
        <end position="329"/>
    </location>
</feature>
<evidence type="ECO:0000255" key="1">
    <source>
        <dbReference type="HAMAP-Rule" id="MF_01862"/>
    </source>
</evidence>